<reference key="1">
    <citation type="submission" date="2008-04" db="EMBL/GenBank/DDBJ databases">
        <title>Complete sequence of Yersinia pseudotuberculosis PB1/+.</title>
        <authorList>
            <person name="Copeland A."/>
            <person name="Lucas S."/>
            <person name="Lapidus A."/>
            <person name="Glavina del Rio T."/>
            <person name="Dalin E."/>
            <person name="Tice H."/>
            <person name="Bruce D."/>
            <person name="Goodwin L."/>
            <person name="Pitluck S."/>
            <person name="Munk A.C."/>
            <person name="Brettin T."/>
            <person name="Detter J.C."/>
            <person name="Han C."/>
            <person name="Tapia R."/>
            <person name="Schmutz J."/>
            <person name="Larimer F."/>
            <person name="Land M."/>
            <person name="Hauser L."/>
            <person name="Challacombe J.F."/>
            <person name="Green L."/>
            <person name="Lindler L.E."/>
            <person name="Nikolich M.P."/>
            <person name="Richardson P."/>
        </authorList>
    </citation>
    <scope>NUCLEOTIDE SEQUENCE [LARGE SCALE GENOMIC DNA]</scope>
    <source>
        <strain>PB1/+</strain>
    </source>
</reference>
<keyword id="KW-0997">Cell inner membrane</keyword>
<keyword id="KW-1003">Cell membrane</keyword>
<keyword id="KW-0472">Membrane</keyword>
<keyword id="KW-0812">Transmembrane</keyword>
<keyword id="KW-1133">Transmembrane helix</keyword>
<dbReference type="EMBL" id="CP001048">
    <property type="protein sequence ID" value="ACC90786.1"/>
    <property type="molecule type" value="Genomic_DNA"/>
</dbReference>
<dbReference type="RefSeq" id="WP_002212086.1">
    <property type="nucleotide sequence ID" value="NZ_CP009780.1"/>
</dbReference>
<dbReference type="SMR" id="B2K4Y4"/>
<dbReference type="GeneID" id="96663139"/>
<dbReference type="KEGG" id="ypb:YPTS_3833"/>
<dbReference type="PATRIC" id="fig|502801.10.peg.3301"/>
<dbReference type="GO" id="GO:0005886">
    <property type="term" value="C:plasma membrane"/>
    <property type="evidence" value="ECO:0007669"/>
    <property type="project" value="UniProtKB-SubCell"/>
</dbReference>
<dbReference type="GO" id="GO:0016036">
    <property type="term" value="P:cellular response to phosphate starvation"/>
    <property type="evidence" value="ECO:0007669"/>
    <property type="project" value="InterPro"/>
</dbReference>
<dbReference type="HAMAP" id="MF_01048">
    <property type="entry name" value="PsiE"/>
    <property type="match status" value="1"/>
</dbReference>
<dbReference type="InterPro" id="IPR009315">
    <property type="entry name" value="P_starv_induced_PsiE"/>
</dbReference>
<dbReference type="InterPro" id="IPR020948">
    <property type="entry name" value="P_starv_induced_PsiE-like"/>
</dbReference>
<dbReference type="NCBIfam" id="NF002764">
    <property type="entry name" value="PRK02833.1-2"/>
    <property type="match status" value="1"/>
</dbReference>
<dbReference type="NCBIfam" id="NF002765">
    <property type="entry name" value="PRK02833.1-3"/>
    <property type="match status" value="1"/>
</dbReference>
<dbReference type="PANTHER" id="PTHR37819">
    <property type="entry name" value="PROTEIN PSIE"/>
    <property type="match status" value="1"/>
</dbReference>
<dbReference type="PANTHER" id="PTHR37819:SF1">
    <property type="entry name" value="PROTEIN PSIE"/>
    <property type="match status" value="1"/>
</dbReference>
<dbReference type="Pfam" id="PF06146">
    <property type="entry name" value="PsiE"/>
    <property type="match status" value="1"/>
</dbReference>
<dbReference type="PIRSF" id="PIRSF029598">
    <property type="entry name" value="PsiE"/>
    <property type="match status" value="1"/>
</dbReference>
<feature type="chain" id="PRO_1000136225" description="Protein PsiE homolog">
    <location>
        <begin position="1"/>
        <end position="135"/>
    </location>
</feature>
<feature type="transmembrane region" description="Helical" evidence="1">
    <location>
        <begin position="20"/>
        <end position="40"/>
    </location>
</feature>
<feature type="transmembrane region" description="Helical" evidence="1">
    <location>
        <begin position="54"/>
        <end position="74"/>
    </location>
</feature>
<feature type="transmembrane region" description="Helical" evidence="1">
    <location>
        <begin position="82"/>
        <end position="102"/>
    </location>
</feature>
<feature type="transmembrane region" description="Helical" evidence="1">
    <location>
        <begin position="107"/>
        <end position="127"/>
    </location>
</feature>
<gene>
    <name evidence="1" type="primary">psiE</name>
    <name type="ordered locus">YPTS_3833</name>
</gene>
<comment type="subcellular location">
    <subcellularLocation>
        <location evidence="1">Cell inner membrane</location>
        <topology evidence="1">Multi-pass membrane protein</topology>
    </subcellularLocation>
</comment>
<comment type="similarity">
    <text evidence="1">Belongs to the PsiE family.</text>
</comment>
<sequence length="135" mass="15648">MAKNSRSQWIAKNLQRLLNVGLIMLAAILVVFLVKETIHLGKVLFLSNQETSSYMLIEGIVIYFLYFEFIALIVKYFESGYHFPLRYFIYIGITAIIRLIIVDHENPIDTLIYSGSILVLVVTLYLANTERLKRE</sequence>
<accession>B2K4Y4</accession>
<name>PSIE_YERPB</name>
<protein>
    <recommendedName>
        <fullName evidence="1">Protein PsiE homolog</fullName>
    </recommendedName>
</protein>
<proteinExistence type="inferred from homology"/>
<evidence type="ECO:0000255" key="1">
    <source>
        <dbReference type="HAMAP-Rule" id="MF_01048"/>
    </source>
</evidence>
<organism>
    <name type="scientific">Yersinia pseudotuberculosis serotype IB (strain PB1/+)</name>
    <dbReference type="NCBI Taxonomy" id="502801"/>
    <lineage>
        <taxon>Bacteria</taxon>
        <taxon>Pseudomonadati</taxon>
        <taxon>Pseudomonadota</taxon>
        <taxon>Gammaproteobacteria</taxon>
        <taxon>Enterobacterales</taxon>
        <taxon>Yersiniaceae</taxon>
        <taxon>Yersinia</taxon>
    </lineage>
</organism>